<proteinExistence type="evidence at transcript level"/>
<dbReference type="EMBL" id="AY916449">
    <property type="protein sequence ID" value="AAW82541.1"/>
    <property type="molecule type" value="Genomic_DNA"/>
</dbReference>
<dbReference type="EMBL" id="AY916449">
    <property type="protein sequence ID" value="AAW82552.1"/>
    <property type="status" value="ALT_SEQ"/>
    <property type="molecule type" value="Genomic_DNA"/>
</dbReference>
<dbReference type="SMR" id="Q3BAJ4"/>
<dbReference type="GO" id="GO:0009507">
    <property type="term" value="C:chloroplast"/>
    <property type="evidence" value="ECO:0007669"/>
    <property type="project" value="UniProtKB-SubCell"/>
</dbReference>
<dbReference type="GO" id="GO:0005762">
    <property type="term" value="C:mitochondrial large ribosomal subunit"/>
    <property type="evidence" value="ECO:0007669"/>
    <property type="project" value="TreeGrafter"/>
</dbReference>
<dbReference type="GO" id="GO:0019843">
    <property type="term" value="F:rRNA binding"/>
    <property type="evidence" value="ECO:0007669"/>
    <property type="project" value="UniProtKB-UniRule"/>
</dbReference>
<dbReference type="GO" id="GO:0003735">
    <property type="term" value="F:structural constituent of ribosome"/>
    <property type="evidence" value="ECO:0007669"/>
    <property type="project" value="InterPro"/>
</dbReference>
<dbReference type="GO" id="GO:0016740">
    <property type="term" value="F:transferase activity"/>
    <property type="evidence" value="ECO:0007669"/>
    <property type="project" value="InterPro"/>
</dbReference>
<dbReference type="GO" id="GO:0032543">
    <property type="term" value="P:mitochondrial translation"/>
    <property type="evidence" value="ECO:0007669"/>
    <property type="project" value="TreeGrafter"/>
</dbReference>
<dbReference type="FunFam" id="4.10.950.10:FF:000001">
    <property type="entry name" value="50S ribosomal protein L2"/>
    <property type="match status" value="1"/>
</dbReference>
<dbReference type="FunFam" id="2.30.30.30:FF:000008">
    <property type="entry name" value="50S ribosomal protein L2, chloroplastic"/>
    <property type="match status" value="1"/>
</dbReference>
<dbReference type="FunFam" id="2.40.50.140:FF:000029">
    <property type="entry name" value="50S ribosomal protein L2, chloroplastic"/>
    <property type="match status" value="1"/>
</dbReference>
<dbReference type="Gene3D" id="2.30.30.30">
    <property type="match status" value="1"/>
</dbReference>
<dbReference type="Gene3D" id="2.40.50.140">
    <property type="entry name" value="Nucleic acid-binding proteins"/>
    <property type="match status" value="1"/>
</dbReference>
<dbReference type="Gene3D" id="4.10.950.10">
    <property type="entry name" value="Ribosomal protein L2, domain 3"/>
    <property type="match status" value="1"/>
</dbReference>
<dbReference type="HAMAP" id="MF_01320_B">
    <property type="entry name" value="Ribosomal_uL2_B"/>
    <property type="match status" value="1"/>
</dbReference>
<dbReference type="InterPro" id="IPR012340">
    <property type="entry name" value="NA-bd_OB-fold"/>
</dbReference>
<dbReference type="InterPro" id="IPR014722">
    <property type="entry name" value="Rib_uL2_dom2"/>
</dbReference>
<dbReference type="InterPro" id="IPR002171">
    <property type="entry name" value="Ribosomal_uL2"/>
</dbReference>
<dbReference type="InterPro" id="IPR005880">
    <property type="entry name" value="Ribosomal_uL2_bac/org-type"/>
</dbReference>
<dbReference type="InterPro" id="IPR022669">
    <property type="entry name" value="Ribosomal_uL2_C"/>
</dbReference>
<dbReference type="InterPro" id="IPR022671">
    <property type="entry name" value="Ribosomal_uL2_CS"/>
</dbReference>
<dbReference type="InterPro" id="IPR014726">
    <property type="entry name" value="Ribosomal_uL2_dom3"/>
</dbReference>
<dbReference type="InterPro" id="IPR022666">
    <property type="entry name" value="Ribosomal_uL2_RNA-bd_dom"/>
</dbReference>
<dbReference type="InterPro" id="IPR008991">
    <property type="entry name" value="Translation_prot_SH3-like_sf"/>
</dbReference>
<dbReference type="NCBIfam" id="TIGR01171">
    <property type="entry name" value="rplB_bact"/>
    <property type="match status" value="1"/>
</dbReference>
<dbReference type="PANTHER" id="PTHR13691:SF5">
    <property type="entry name" value="LARGE RIBOSOMAL SUBUNIT PROTEIN UL2M"/>
    <property type="match status" value="1"/>
</dbReference>
<dbReference type="PANTHER" id="PTHR13691">
    <property type="entry name" value="RIBOSOMAL PROTEIN L2"/>
    <property type="match status" value="1"/>
</dbReference>
<dbReference type="Pfam" id="PF00181">
    <property type="entry name" value="Ribosomal_L2"/>
    <property type="match status" value="1"/>
</dbReference>
<dbReference type="Pfam" id="PF03947">
    <property type="entry name" value="Ribosomal_L2_C"/>
    <property type="match status" value="1"/>
</dbReference>
<dbReference type="PIRSF" id="PIRSF002158">
    <property type="entry name" value="Ribosomal_L2"/>
    <property type="match status" value="1"/>
</dbReference>
<dbReference type="SMART" id="SM01383">
    <property type="entry name" value="Ribosomal_L2"/>
    <property type="match status" value="1"/>
</dbReference>
<dbReference type="SMART" id="SM01382">
    <property type="entry name" value="Ribosomal_L2_C"/>
    <property type="match status" value="1"/>
</dbReference>
<dbReference type="SUPFAM" id="SSF50249">
    <property type="entry name" value="Nucleic acid-binding proteins"/>
    <property type="match status" value="1"/>
</dbReference>
<dbReference type="SUPFAM" id="SSF50104">
    <property type="entry name" value="Translation proteins SH3-like domain"/>
    <property type="match status" value="1"/>
</dbReference>
<dbReference type="PROSITE" id="PS00467">
    <property type="entry name" value="RIBOSOMAL_L2"/>
    <property type="match status" value="1"/>
</dbReference>
<comment type="subunit">
    <text evidence="1">Part of the 50S ribosomal subunit.</text>
</comment>
<comment type="subcellular location">
    <subcellularLocation>
        <location>Plastid</location>
        <location>Chloroplast</location>
    </subcellularLocation>
</comment>
<comment type="RNA editing">
    <location>
        <position position="1" evidence="4"/>
    </location>
    <text>The initiator methionine is created by RNA editing.</text>
</comment>
<comment type="similarity">
    <text evidence="5">Belongs to the universal ribosomal protein uL2 family.</text>
</comment>
<reference key="1">
    <citation type="journal article" date="2006" name="Mol. Biol. Evol.">
        <title>The chloroplast genome of Phalaenopsis aphrodite (Orchidaceae): comparative analysis of evolutionary rate with that of grasses and its phylogenetic implications.</title>
        <authorList>
            <person name="Chang C.-C."/>
            <person name="Lin H.-C."/>
            <person name="Lin I.-P."/>
            <person name="Chow T.-Y."/>
            <person name="Chen H.-H."/>
            <person name="Chen W.-H."/>
            <person name="Cheng C.-H."/>
            <person name="Lin C.-Y."/>
            <person name="Liu S.-M."/>
            <person name="Chang C.-C."/>
            <person name="Chaw S.-M."/>
        </authorList>
    </citation>
    <scope>NUCLEOTIDE SEQUENCE [LARGE SCALE GENOMIC DNA]</scope>
    <scope>RNA EDITING</scope>
    <source>
        <strain>cv. Taisugar TS-97</strain>
    </source>
</reference>
<reference key="2">
    <citation type="unpublished observations" date="2006-02">
        <authorList>
            <person name="Chang C.-C."/>
            <person name="Chaw S.-M."/>
        </authorList>
    </citation>
    <scope>SEQUENCE REVISION TO 115</scope>
</reference>
<organism>
    <name type="scientific">Phalaenopsis aphrodite subsp. formosana</name>
    <name type="common">Moth orchid</name>
    <dbReference type="NCBI Taxonomy" id="308872"/>
    <lineage>
        <taxon>Eukaryota</taxon>
        <taxon>Viridiplantae</taxon>
        <taxon>Streptophyta</taxon>
        <taxon>Embryophyta</taxon>
        <taxon>Tracheophyta</taxon>
        <taxon>Spermatophyta</taxon>
        <taxon>Magnoliopsida</taxon>
        <taxon>Liliopsida</taxon>
        <taxon>Asparagales</taxon>
        <taxon>Orchidaceae</taxon>
        <taxon>Epidendroideae</taxon>
        <taxon>Vandeae</taxon>
        <taxon>Aeridinae</taxon>
        <taxon>Phalaenopsis</taxon>
    </lineage>
</organism>
<name>RK2_PHAAO</name>
<accession>Q3BAJ4</accession>
<accession>Q3BAH1</accession>
<geneLocation type="chloroplast"/>
<protein>
    <recommendedName>
        <fullName evidence="2">Large ribosomal subunit protein uL2cz/uL2cy</fullName>
    </recommendedName>
    <alternativeName>
        <fullName evidence="5">50S ribosomal protein L2, chloroplastic</fullName>
    </alternativeName>
</protein>
<gene>
    <name type="primary">rpl2-A</name>
</gene>
<gene>
    <name type="primary">rpl2-B</name>
</gene>
<feature type="chain" id="PRO_0000226948" description="Large ribosomal subunit protein uL2cz/uL2cy">
    <location>
        <begin position="1"/>
        <end position="273"/>
    </location>
</feature>
<feature type="region of interest" description="Disordered" evidence="3">
    <location>
        <begin position="1"/>
        <end position="25"/>
    </location>
</feature>
<feature type="region of interest" description="Disordered" evidence="3">
    <location>
        <begin position="224"/>
        <end position="273"/>
    </location>
</feature>
<feature type="sequence conflict" description="In Ref. 1; AAW82552." evidence="5" ref="1">
    <original>V</original>
    <variation>C</variation>
    <location>
        <position position="115"/>
    </location>
</feature>
<sequence>MAIHLYKTSTSSTRNGAVDSQVKSNPRNNLIYGQHRCGKGRNARGIITAGHRGGGHKRLYRKIDFRRNEKEISGRIVTIEYDPNRNAYICLIHYGDGEKRYILHPRGAIIGDTIVSGTEVPISMGNALPLTDMPLGTAIHNIEITLGKGGQLARAAGAVAKLIAKEGKSATLRLPSGEVRLISKNCLATVGQVGNVGVNQKSLGRAGSKCWLGKRPVVRGVVMNPVDHPHGGGEGRAPIGRKKPTTPWGYPALGRRSRKRNKYSDSLILRRRK</sequence>
<evidence type="ECO:0000250" key="1"/>
<evidence type="ECO:0000255" key="2">
    <source>
        <dbReference type="HAMAP-Rule" id="MF_01320"/>
    </source>
</evidence>
<evidence type="ECO:0000256" key="3">
    <source>
        <dbReference type="SAM" id="MobiDB-lite"/>
    </source>
</evidence>
<evidence type="ECO:0000269" key="4">
    <source>
    </source>
</evidence>
<evidence type="ECO:0000305" key="5"/>
<keyword id="KW-0150">Chloroplast</keyword>
<keyword id="KW-0934">Plastid</keyword>
<keyword id="KW-0687">Ribonucleoprotein</keyword>
<keyword id="KW-0689">Ribosomal protein</keyword>
<keyword id="KW-0691">RNA editing</keyword>